<name>QUEC_SALPA</name>
<reference key="1">
    <citation type="journal article" date="2004" name="Nat. Genet.">
        <title>Comparison of genome degradation in Paratyphi A and Typhi, human-restricted serovars of Salmonella enterica that cause typhoid.</title>
        <authorList>
            <person name="McClelland M."/>
            <person name="Sanderson K.E."/>
            <person name="Clifton S.W."/>
            <person name="Latreille P."/>
            <person name="Porwollik S."/>
            <person name="Sabo A."/>
            <person name="Meyer R."/>
            <person name="Bieri T."/>
            <person name="Ozersky P."/>
            <person name="McLellan M."/>
            <person name="Harkins C.R."/>
            <person name="Wang C."/>
            <person name="Nguyen C."/>
            <person name="Berghoff A."/>
            <person name="Elliott G."/>
            <person name="Kohlberg S."/>
            <person name="Strong C."/>
            <person name="Du F."/>
            <person name="Carter J."/>
            <person name="Kremizki C."/>
            <person name="Layman D."/>
            <person name="Leonard S."/>
            <person name="Sun H."/>
            <person name="Fulton L."/>
            <person name="Nash W."/>
            <person name="Miner T."/>
            <person name="Minx P."/>
            <person name="Delehaunty K."/>
            <person name="Fronick C."/>
            <person name="Magrini V."/>
            <person name="Nhan M."/>
            <person name="Warren W."/>
            <person name="Florea L."/>
            <person name="Spieth J."/>
            <person name="Wilson R.K."/>
        </authorList>
    </citation>
    <scope>NUCLEOTIDE SEQUENCE [LARGE SCALE GENOMIC DNA]</scope>
    <source>
        <strain>ATCC 9150 / SARB42</strain>
    </source>
</reference>
<feature type="chain" id="PRO_0000246918" description="7-cyano-7-deazaguanine synthase">
    <location>
        <begin position="1"/>
        <end position="231"/>
    </location>
</feature>
<feature type="binding site" evidence="1">
    <location>
        <begin position="8"/>
        <end position="18"/>
    </location>
    <ligand>
        <name>ATP</name>
        <dbReference type="ChEBI" id="CHEBI:30616"/>
    </ligand>
</feature>
<feature type="binding site" evidence="1">
    <location>
        <position position="188"/>
    </location>
    <ligand>
        <name>Zn(2+)</name>
        <dbReference type="ChEBI" id="CHEBI:29105"/>
    </ligand>
</feature>
<feature type="binding site" evidence="1">
    <location>
        <position position="197"/>
    </location>
    <ligand>
        <name>Zn(2+)</name>
        <dbReference type="ChEBI" id="CHEBI:29105"/>
    </ligand>
</feature>
<feature type="binding site" evidence="1">
    <location>
        <position position="200"/>
    </location>
    <ligand>
        <name>Zn(2+)</name>
        <dbReference type="ChEBI" id="CHEBI:29105"/>
    </ligand>
</feature>
<feature type="binding site" evidence="1">
    <location>
        <position position="203"/>
    </location>
    <ligand>
        <name>Zn(2+)</name>
        <dbReference type="ChEBI" id="CHEBI:29105"/>
    </ligand>
</feature>
<keyword id="KW-0067">ATP-binding</keyword>
<keyword id="KW-0436">Ligase</keyword>
<keyword id="KW-0479">Metal-binding</keyword>
<keyword id="KW-0547">Nucleotide-binding</keyword>
<keyword id="KW-0671">Queuosine biosynthesis</keyword>
<keyword id="KW-0862">Zinc</keyword>
<evidence type="ECO:0000255" key="1">
    <source>
        <dbReference type="HAMAP-Rule" id="MF_01633"/>
    </source>
</evidence>
<proteinExistence type="inferred from homology"/>
<gene>
    <name evidence="1" type="primary">queC</name>
    <name type="ordered locus">SPA2267</name>
</gene>
<protein>
    <recommendedName>
        <fullName evidence="1">7-cyano-7-deazaguanine synthase</fullName>
        <ecNumber evidence="1">6.3.4.20</ecNumber>
    </recommendedName>
    <alternativeName>
        <fullName evidence="1">7-cyano-7-carbaguanine synthase</fullName>
    </alternativeName>
    <alternativeName>
        <fullName evidence="1">PreQ(0) synthase</fullName>
    </alternativeName>
    <alternativeName>
        <fullName evidence="1">Queuosine biosynthesis protein QueC</fullName>
    </alternativeName>
</protein>
<dbReference type="EC" id="6.3.4.20" evidence="1"/>
<dbReference type="EMBL" id="CP000026">
    <property type="protein sequence ID" value="AAV78152.1"/>
    <property type="molecule type" value="Genomic_DNA"/>
</dbReference>
<dbReference type="RefSeq" id="WP_000817205.1">
    <property type="nucleotide sequence ID" value="NC_006511.1"/>
</dbReference>
<dbReference type="SMR" id="Q5PFP1"/>
<dbReference type="KEGG" id="spt:SPA2267"/>
<dbReference type="HOGENOM" id="CLU_081854_0_0_6"/>
<dbReference type="UniPathway" id="UPA00391"/>
<dbReference type="Proteomes" id="UP000008185">
    <property type="component" value="Chromosome"/>
</dbReference>
<dbReference type="GO" id="GO:0005524">
    <property type="term" value="F:ATP binding"/>
    <property type="evidence" value="ECO:0007669"/>
    <property type="project" value="UniProtKB-UniRule"/>
</dbReference>
<dbReference type="GO" id="GO:0016879">
    <property type="term" value="F:ligase activity, forming carbon-nitrogen bonds"/>
    <property type="evidence" value="ECO:0007669"/>
    <property type="project" value="UniProtKB-UniRule"/>
</dbReference>
<dbReference type="GO" id="GO:0008270">
    <property type="term" value="F:zinc ion binding"/>
    <property type="evidence" value="ECO:0007669"/>
    <property type="project" value="UniProtKB-UniRule"/>
</dbReference>
<dbReference type="GO" id="GO:0008616">
    <property type="term" value="P:queuosine biosynthetic process"/>
    <property type="evidence" value="ECO:0007669"/>
    <property type="project" value="UniProtKB-UniRule"/>
</dbReference>
<dbReference type="CDD" id="cd01995">
    <property type="entry name" value="QueC-like"/>
    <property type="match status" value="1"/>
</dbReference>
<dbReference type="FunFam" id="3.40.50.620:FF:000017">
    <property type="entry name" value="7-cyano-7-deazaguanine synthase"/>
    <property type="match status" value="1"/>
</dbReference>
<dbReference type="Gene3D" id="3.40.50.620">
    <property type="entry name" value="HUPs"/>
    <property type="match status" value="1"/>
</dbReference>
<dbReference type="HAMAP" id="MF_01633">
    <property type="entry name" value="QueC"/>
    <property type="match status" value="1"/>
</dbReference>
<dbReference type="InterPro" id="IPR018317">
    <property type="entry name" value="QueC"/>
</dbReference>
<dbReference type="InterPro" id="IPR014729">
    <property type="entry name" value="Rossmann-like_a/b/a_fold"/>
</dbReference>
<dbReference type="NCBIfam" id="TIGR00364">
    <property type="entry name" value="7-cyano-7-deazaguanine synthase QueC"/>
    <property type="match status" value="1"/>
</dbReference>
<dbReference type="NCBIfam" id="NF008317">
    <property type="entry name" value="PRK11106.1"/>
    <property type="match status" value="1"/>
</dbReference>
<dbReference type="PANTHER" id="PTHR42914">
    <property type="entry name" value="7-CYANO-7-DEAZAGUANINE SYNTHASE"/>
    <property type="match status" value="1"/>
</dbReference>
<dbReference type="PANTHER" id="PTHR42914:SF1">
    <property type="entry name" value="7-CYANO-7-DEAZAGUANINE SYNTHASE"/>
    <property type="match status" value="1"/>
</dbReference>
<dbReference type="Pfam" id="PF06508">
    <property type="entry name" value="QueC"/>
    <property type="match status" value="1"/>
</dbReference>
<dbReference type="PIRSF" id="PIRSF006293">
    <property type="entry name" value="ExsB"/>
    <property type="match status" value="1"/>
</dbReference>
<dbReference type="SUPFAM" id="SSF52402">
    <property type="entry name" value="Adenine nucleotide alpha hydrolases-like"/>
    <property type="match status" value="1"/>
</dbReference>
<comment type="function">
    <text evidence="1">Catalyzes the ATP-dependent conversion of 7-carboxy-7-deazaguanine (CDG) to 7-cyano-7-deazaguanine (preQ(0)).</text>
</comment>
<comment type="catalytic activity">
    <reaction evidence="1">
        <text>7-carboxy-7-deazaguanine + NH4(+) + ATP = 7-cyano-7-deazaguanine + ADP + phosphate + H2O + H(+)</text>
        <dbReference type="Rhea" id="RHEA:27982"/>
        <dbReference type="ChEBI" id="CHEBI:15377"/>
        <dbReference type="ChEBI" id="CHEBI:15378"/>
        <dbReference type="ChEBI" id="CHEBI:28938"/>
        <dbReference type="ChEBI" id="CHEBI:30616"/>
        <dbReference type="ChEBI" id="CHEBI:43474"/>
        <dbReference type="ChEBI" id="CHEBI:45075"/>
        <dbReference type="ChEBI" id="CHEBI:61036"/>
        <dbReference type="ChEBI" id="CHEBI:456216"/>
        <dbReference type="EC" id="6.3.4.20"/>
    </reaction>
</comment>
<comment type="cofactor">
    <cofactor evidence="1">
        <name>Zn(2+)</name>
        <dbReference type="ChEBI" id="CHEBI:29105"/>
    </cofactor>
    <text evidence="1">Binds 1 zinc ion per subunit.</text>
</comment>
<comment type="pathway">
    <text evidence="1">Purine metabolism; 7-cyano-7-deazaguanine biosynthesis.</text>
</comment>
<comment type="similarity">
    <text evidence="1">Belongs to the QueC family.</text>
</comment>
<sequence length="231" mass="25499">MKRAVVVFSGGQDSTTCLAQARHQYDEVHCVTFDYGQRHRAEIDVARALALKLGARAHKVLDVTLLNELAVSSLTRDSIPVPDYEPNADGIPNTFVPGRNILFLTLVAIYAYQVKAEAVITGVCETDFSGYPDCRDEFVKALNHAVNLGMAKDIRFETPLMWIDKAETWALADYWGQLDLVREETLTCYNGIKGDGCGHCAACNLRANGLNHYLSNKSAVMAAMKQKTGLR</sequence>
<organism>
    <name type="scientific">Salmonella paratyphi A (strain ATCC 9150 / SARB42)</name>
    <dbReference type="NCBI Taxonomy" id="295319"/>
    <lineage>
        <taxon>Bacteria</taxon>
        <taxon>Pseudomonadati</taxon>
        <taxon>Pseudomonadota</taxon>
        <taxon>Gammaproteobacteria</taxon>
        <taxon>Enterobacterales</taxon>
        <taxon>Enterobacteriaceae</taxon>
        <taxon>Salmonella</taxon>
    </lineage>
</organism>
<accession>Q5PFP1</accession>